<evidence type="ECO:0000255" key="1">
    <source>
        <dbReference type="HAMAP-Rule" id="MF_01456"/>
    </source>
</evidence>
<proteinExistence type="inferred from homology"/>
<sequence>MNYIVLAAIVFTIGAVGVLVRRNAIIVFMCVELMLNACNLAFVAFARMHGGIEGQVIAFFVMVVAAAEVVVGLAIIMQIFRTRRSASIDDANLLKN</sequence>
<reference key="1">
    <citation type="journal article" date="2007" name="J. Bacteriol.">
        <title>Genome sequence and analysis of the soil cellulolytic actinomycete Thermobifida fusca YX.</title>
        <authorList>
            <person name="Lykidis A."/>
            <person name="Mavromatis K."/>
            <person name="Ivanova N."/>
            <person name="Anderson I."/>
            <person name="Land M."/>
            <person name="DiBartolo G."/>
            <person name="Martinez M."/>
            <person name="Lapidus A."/>
            <person name="Lucas S."/>
            <person name="Copeland A."/>
            <person name="Richardson P."/>
            <person name="Wilson D.B."/>
            <person name="Kyrpides N."/>
        </authorList>
    </citation>
    <scope>NUCLEOTIDE SEQUENCE [LARGE SCALE GENOMIC DNA]</scope>
    <source>
        <strain>YX</strain>
    </source>
</reference>
<protein>
    <recommendedName>
        <fullName evidence="1">NADH-quinone oxidoreductase subunit K</fullName>
        <ecNumber evidence="1">7.1.1.-</ecNumber>
    </recommendedName>
    <alternativeName>
        <fullName evidence="1">NADH dehydrogenase I subunit K</fullName>
    </alternativeName>
    <alternativeName>
        <fullName evidence="1">NDH-1 subunit K</fullName>
    </alternativeName>
</protein>
<organism>
    <name type="scientific">Thermobifida fusca (strain YX)</name>
    <dbReference type="NCBI Taxonomy" id="269800"/>
    <lineage>
        <taxon>Bacteria</taxon>
        <taxon>Bacillati</taxon>
        <taxon>Actinomycetota</taxon>
        <taxon>Actinomycetes</taxon>
        <taxon>Streptosporangiales</taxon>
        <taxon>Nocardiopsidaceae</taxon>
        <taxon>Thermobifida</taxon>
    </lineage>
</organism>
<name>NUOK_THEFY</name>
<feature type="chain" id="PRO_0000390262" description="NADH-quinone oxidoreductase subunit K">
    <location>
        <begin position="1"/>
        <end position="96"/>
    </location>
</feature>
<feature type="transmembrane region" description="Helical" evidence="1">
    <location>
        <begin position="1"/>
        <end position="21"/>
    </location>
</feature>
<feature type="transmembrane region" description="Helical" evidence="1">
    <location>
        <begin position="25"/>
        <end position="45"/>
    </location>
</feature>
<feature type="transmembrane region" description="Helical" evidence="1">
    <location>
        <begin position="56"/>
        <end position="76"/>
    </location>
</feature>
<gene>
    <name evidence="1" type="primary">nuoK</name>
    <name type="ordered locus">Tfu_2685</name>
</gene>
<accession>Q47LF4</accession>
<comment type="function">
    <text evidence="1">NDH-1 shuttles electrons from NADH, via FMN and iron-sulfur (Fe-S) centers, to quinones in the respiratory chain. The immediate electron acceptor for the enzyme in this species is believed to be a menaquinone. Couples the redox reaction to proton translocation (for every two electrons transferred, four hydrogen ions are translocated across the cytoplasmic membrane), and thus conserves the redox energy in a proton gradient.</text>
</comment>
<comment type="catalytic activity">
    <reaction evidence="1">
        <text>a quinone + NADH + 5 H(+)(in) = a quinol + NAD(+) + 4 H(+)(out)</text>
        <dbReference type="Rhea" id="RHEA:57888"/>
        <dbReference type="ChEBI" id="CHEBI:15378"/>
        <dbReference type="ChEBI" id="CHEBI:24646"/>
        <dbReference type="ChEBI" id="CHEBI:57540"/>
        <dbReference type="ChEBI" id="CHEBI:57945"/>
        <dbReference type="ChEBI" id="CHEBI:132124"/>
    </reaction>
</comment>
<comment type="subunit">
    <text evidence="1">NDH-1 is composed of 14 different subunits. Subunits NuoA, H, J, K, L, M, N constitute the membrane sector of the complex.</text>
</comment>
<comment type="subcellular location">
    <subcellularLocation>
        <location evidence="1">Cell membrane</location>
        <topology evidence="1">Multi-pass membrane protein</topology>
    </subcellularLocation>
</comment>
<comment type="similarity">
    <text evidence="1">Belongs to the complex I subunit 4L family.</text>
</comment>
<keyword id="KW-1003">Cell membrane</keyword>
<keyword id="KW-0472">Membrane</keyword>
<keyword id="KW-0520">NAD</keyword>
<keyword id="KW-0874">Quinone</keyword>
<keyword id="KW-1278">Translocase</keyword>
<keyword id="KW-0812">Transmembrane</keyword>
<keyword id="KW-1133">Transmembrane helix</keyword>
<keyword id="KW-0813">Transport</keyword>
<dbReference type="EC" id="7.1.1.-" evidence="1"/>
<dbReference type="EMBL" id="CP000088">
    <property type="protein sequence ID" value="AAZ56718.1"/>
    <property type="molecule type" value="Genomic_DNA"/>
</dbReference>
<dbReference type="SMR" id="Q47LF4"/>
<dbReference type="STRING" id="269800.Tfu_2685"/>
<dbReference type="KEGG" id="tfu:Tfu_2685"/>
<dbReference type="eggNOG" id="COG0713">
    <property type="taxonomic scope" value="Bacteria"/>
</dbReference>
<dbReference type="HOGENOM" id="CLU_144724_0_0_11"/>
<dbReference type="GO" id="GO:0030964">
    <property type="term" value="C:NADH dehydrogenase complex"/>
    <property type="evidence" value="ECO:0007669"/>
    <property type="project" value="TreeGrafter"/>
</dbReference>
<dbReference type="GO" id="GO:0005886">
    <property type="term" value="C:plasma membrane"/>
    <property type="evidence" value="ECO:0007669"/>
    <property type="project" value="UniProtKB-SubCell"/>
</dbReference>
<dbReference type="GO" id="GO:0050136">
    <property type="term" value="F:NADH:ubiquinone reductase (non-electrogenic) activity"/>
    <property type="evidence" value="ECO:0007669"/>
    <property type="project" value="UniProtKB-UniRule"/>
</dbReference>
<dbReference type="GO" id="GO:0048038">
    <property type="term" value="F:quinone binding"/>
    <property type="evidence" value="ECO:0007669"/>
    <property type="project" value="UniProtKB-KW"/>
</dbReference>
<dbReference type="GO" id="GO:0042773">
    <property type="term" value="P:ATP synthesis coupled electron transport"/>
    <property type="evidence" value="ECO:0007669"/>
    <property type="project" value="InterPro"/>
</dbReference>
<dbReference type="FunFam" id="1.10.287.3510:FF:000001">
    <property type="entry name" value="NADH-quinone oxidoreductase subunit K"/>
    <property type="match status" value="1"/>
</dbReference>
<dbReference type="Gene3D" id="1.10.287.3510">
    <property type="match status" value="1"/>
</dbReference>
<dbReference type="HAMAP" id="MF_01456">
    <property type="entry name" value="NDH1_NuoK"/>
    <property type="match status" value="1"/>
</dbReference>
<dbReference type="InterPro" id="IPR001133">
    <property type="entry name" value="NADH_UbQ_OxRdtase_chain4L/K"/>
</dbReference>
<dbReference type="InterPro" id="IPR039428">
    <property type="entry name" value="NUOK/Mnh_C1-like"/>
</dbReference>
<dbReference type="NCBIfam" id="NF004320">
    <property type="entry name" value="PRK05715.1-2"/>
    <property type="match status" value="1"/>
</dbReference>
<dbReference type="PANTHER" id="PTHR11434:SF21">
    <property type="entry name" value="NADH DEHYDROGENASE SUBUNIT 4L-RELATED"/>
    <property type="match status" value="1"/>
</dbReference>
<dbReference type="PANTHER" id="PTHR11434">
    <property type="entry name" value="NADH-UBIQUINONE OXIDOREDUCTASE SUBUNIT ND4L"/>
    <property type="match status" value="1"/>
</dbReference>
<dbReference type="Pfam" id="PF00420">
    <property type="entry name" value="Oxidored_q2"/>
    <property type="match status" value="1"/>
</dbReference>